<protein>
    <recommendedName>
        <fullName>Protein MGF 360-16R</fullName>
    </recommendedName>
</protein>
<keyword id="KW-0244">Early protein</keyword>
<comment type="function">
    <text evidence="1">Plays a role in virus cell tropism, and may be required for efficient virus replication in macrophages.</text>
</comment>
<comment type="induction">
    <text evidence="2">Expressed in the early phase of the viral replicative cycle.</text>
</comment>
<comment type="similarity">
    <text evidence="2">Belongs to the asfivirus MGF 360 family.</text>
</comment>
<proteinExistence type="inferred from homology"/>
<organismHost>
    <name type="scientific">Ornithodoros</name>
    <name type="common">relapsing fever ticks</name>
    <dbReference type="NCBI Taxonomy" id="6937"/>
</organismHost>
<organismHost>
    <name type="scientific">Phacochoerus aethiopicus</name>
    <name type="common">Warthog</name>
    <dbReference type="NCBI Taxonomy" id="85517"/>
</organismHost>
<organismHost>
    <name type="scientific">Phacochoerus africanus</name>
    <name type="common">Warthog</name>
    <dbReference type="NCBI Taxonomy" id="41426"/>
</organismHost>
<organismHost>
    <name type="scientific">Potamochoerus larvatus</name>
    <name type="common">Bushpig</name>
    <dbReference type="NCBI Taxonomy" id="273792"/>
</organismHost>
<organismHost>
    <name type="scientific">Sus scrofa</name>
    <name type="common">Pig</name>
    <dbReference type="NCBI Taxonomy" id="9823"/>
</organismHost>
<dbReference type="EMBL" id="X71982">
    <property type="protein sequence ID" value="CAA50855.1"/>
    <property type="molecule type" value="Genomic_DNA"/>
</dbReference>
<dbReference type="EMBL" id="AY261361">
    <property type="status" value="NOT_ANNOTATED_CDS"/>
    <property type="molecule type" value="Genomic_DNA"/>
</dbReference>
<dbReference type="Proteomes" id="UP000000860">
    <property type="component" value="Segment"/>
</dbReference>
<dbReference type="GO" id="GO:0042330">
    <property type="term" value="P:taxis"/>
    <property type="evidence" value="ECO:0007669"/>
    <property type="project" value="InterPro"/>
</dbReference>
<dbReference type="InterPro" id="IPR002595">
    <property type="entry name" value="ASFV_MGF360"/>
</dbReference>
<dbReference type="Pfam" id="PF01671">
    <property type="entry name" value="ASFV_360"/>
    <property type="match status" value="1"/>
</dbReference>
<organism>
    <name type="scientific">African swine fever virus (isolate Tick/Malawi/Lil 20-1/1983)</name>
    <name type="common">ASFV</name>
    <dbReference type="NCBI Taxonomy" id="10500"/>
    <lineage>
        <taxon>Viruses</taxon>
        <taxon>Varidnaviria</taxon>
        <taxon>Bamfordvirae</taxon>
        <taxon>Nucleocytoviricota</taxon>
        <taxon>Pokkesviricetes</taxon>
        <taxon>Asfuvirales</taxon>
        <taxon>Asfarviridae</taxon>
        <taxon>Asfivirus</taxon>
        <taxon>African swine fever virus</taxon>
    </lineage>
</organism>
<evidence type="ECO:0000250" key="1">
    <source>
        <dbReference type="UniProtKB" id="P23163"/>
    </source>
</evidence>
<evidence type="ECO:0000305" key="2"/>
<gene>
    <name type="ordered locus">Mal-155</name>
    <name type="ORF">l3R</name>
</gene>
<accession>Q65258</accession>
<name>36016_ASFM2</name>
<feature type="chain" id="PRO_0000373300" description="Protein MGF 360-16R">
    <location>
        <begin position="1"/>
        <end position="352"/>
    </location>
</feature>
<sequence length="352" mass="40683">MLSLQAMAKMAVATNTYSKYHYPILKVFGLWWKNNTLNGPIKICNHCNNITVGEYPMCYNHGMSMDVALIRAVKDRNISLIQLFTEWGGNIDYGALCANTPSMQRLCESLGAKPPKGRMYMDTLIHLSDTLNDNDLIRGYEIFDDNSVLDYVNLVRLKIMLTLKARIPLMEQLDQIALKQLLQRYWYAMAVQHNLRIAIHYFDNHIPNIKPFSLRCALYFNDPFKIHDACRTVTMDPNEMMNIACQQDLNFQSIYYCYLLGADINQAMLMSLNYGNLSNMWFCIDLGANVFKEARALAGKKNRRVLQYILGLNIFKRELIPPCKDPDPSQIQILLKNYILKNVSTVFTYYCQ</sequence>
<reference key="1">
    <citation type="journal article" date="1994" name="J. Gen. Virol.">
        <title>Nucleotide sequence of a 55 kbp region from the right end of the genome of a pathogenic African swine fever virus isolate (Malawi LIL20/1).</title>
        <authorList>
            <person name="Dixon L.K."/>
            <person name="Twigg S.R.F."/>
            <person name="Baylis S.A."/>
            <person name="Vydelingum S."/>
            <person name="Bristow C."/>
            <person name="Hammond J.M."/>
            <person name="Smith G.L."/>
        </authorList>
    </citation>
    <scope>NUCLEOTIDE SEQUENCE [GENOMIC DNA]</scope>
</reference>
<reference key="2">
    <citation type="submission" date="2003-03" db="EMBL/GenBank/DDBJ databases">
        <title>African swine fever virus genomes.</title>
        <authorList>
            <person name="Kutish G.F."/>
            <person name="Rock D.L."/>
        </authorList>
    </citation>
    <scope>NUCLEOTIDE SEQUENCE [LARGE SCALE GENOMIC DNA]</scope>
</reference>